<evidence type="ECO:0000250" key="1"/>
<evidence type="ECO:0000255" key="2"/>
<evidence type="ECO:0000269" key="3">
    <source>
    </source>
</evidence>
<evidence type="ECO:0000269" key="4">
    <source>
    </source>
</evidence>
<evidence type="ECO:0000305" key="5"/>
<name>CAT1_SCHPO</name>
<dbReference type="EMBL" id="CU329670">
    <property type="protein sequence ID" value="CAB63555.3"/>
    <property type="molecule type" value="Genomic_DNA"/>
</dbReference>
<dbReference type="PIR" id="T39122">
    <property type="entry name" value="T39122"/>
</dbReference>
<dbReference type="RefSeq" id="NP_595008.3">
    <property type="nucleotide sequence ID" value="NM_001020439.2"/>
</dbReference>
<dbReference type="SMR" id="Q9URZ4"/>
<dbReference type="BioGRID" id="279988">
    <property type="interactions" value="38"/>
</dbReference>
<dbReference type="FunCoup" id="Q9URZ4">
    <property type="interactions" value="303"/>
</dbReference>
<dbReference type="STRING" id="284812.Q9URZ4"/>
<dbReference type="TCDB" id="2.A.3.10.21">
    <property type="family name" value="the amino acid-polyamine-organocation (apc) family"/>
</dbReference>
<dbReference type="iPTMnet" id="Q9URZ4"/>
<dbReference type="PaxDb" id="4896-SPAC869.11.1"/>
<dbReference type="EnsemblFungi" id="SPAC869.11.1">
    <property type="protein sequence ID" value="SPAC869.11.1:pep"/>
    <property type="gene ID" value="SPAC869.11"/>
</dbReference>
<dbReference type="GeneID" id="2543573"/>
<dbReference type="KEGG" id="spo:2543573"/>
<dbReference type="PomBase" id="SPAC869.11">
    <property type="gene designation" value="cat1"/>
</dbReference>
<dbReference type="VEuPathDB" id="FungiDB:SPAC869.11"/>
<dbReference type="eggNOG" id="KOG1286">
    <property type="taxonomic scope" value="Eukaryota"/>
</dbReference>
<dbReference type="HOGENOM" id="CLU_007946_12_0_1"/>
<dbReference type="InParanoid" id="Q9URZ4"/>
<dbReference type="OMA" id="AGGFNTY"/>
<dbReference type="PRO" id="PR:Q9URZ4"/>
<dbReference type="Proteomes" id="UP000002485">
    <property type="component" value="Chromosome I"/>
</dbReference>
<dbReference type="GO" id="GO:0032153">
    <property type="term" value="C:cell division site"/>
    <property type="evidence" value="ECO:0000314"/>
    <property type="project" value="PomBase"/>
</dbReference>
<dbReference type="GO" id="GO:0032178">
    <property type="term" value="C:medial membrane band"/>
    <property type="evidence" value="ECO:0000314"/>
    <property type="project" value="PomBase"/>
</dbReference>
<dbReference type="GO" id="GO:0016020">
    <property type="term" value="C:membrane"/>
    <property type="evidence" value="ECO:0000318"/>
    <property type="project" value="GO_Central"/>
</dbReference>
<dbReference type="GO" id="GO:0005886">
    <property type="term" value="C:plasma membrane"/>
    <property type="evidence" value="ECO:0000314"/>
    <property type="project" value="PomBase"/>
</dbReference>
<dbReference type="GO" id="GO:0031520">
    <property type="term" value="C:plasma membrane of cell tip"/>
    <property type="evidence" value="ECO:0000314"/>
    <property type="project" value="PomBase"/>
</dbReference>
<dbReference type="GO" id="GO:0015171">
    <property type="term" value="F:amino acid transmembrane transporter activity"/>
    <property type="evidence" value="ECO:0000318"/>
    <property type="project" value="GO_Central"/>
</dbReference>
<dbReference type="GO" id="GO:0061459">
    <property type="term" value="F:L-arginine transmembrane transporter activity"/>
    <property type="evidence" value="ECO:0000315"/>
    <property type="project" value="PomBase"/>
</dbReference>
<dbReference type="GO" id="GO:0015189">
    <property type="term" value="F:L-lysine transmembrane transporter activity"/>
    <property type="evidence" value="ECO:0000315"/>
    <property type="project" value="PomBase"/>
</dbReference>
<dbReference type="GO" id="GO:0003333">
    <property type="term" value="P:amino acid transmembrane transport"/>
    <property type="evidence" value="ECO:0000318"/>
    <property type="project" value="GO_Central"/>
</dbReference>
<dbReference type="GO" id="GO:0097638">
    <property type="term" value="P:L-arginine import across plasma membrane"/>
    <property type="evidence" value="ECO:0000315"/>
    <property type="project" value="PomBase"/>
</dbReference>
<dbReference type="GO" id="GO:0097639">
    <property type="term" value="P:L-lysine import across plasma membrane"/>
    <property type="evidence" value="ECO:0000315"/>
    <property type="project" value="PomBase"/>
</dbReference>
<dbReference type="FunFam" id="1.20.1740.10:FF:000017">
    <property type="entry name" value="Amino acid permease"/>
    <property type="match status" value="1"/>
</dbReference>
<dbReference type="Gene3D" id="1.20.1740.10">
    <property type="entry name" value="Amino acid/polyamine transporter I"/>
    <property type="match status" value="1"/>
</dbReference>
<dbReference type="InterPro" id="IPR004841">
    <property type="entry name" value="AA-permease/SLC12A_dom"/>
</dbReference>
<dbReference type="InterPro" id="IPR004840">
    <property type="entry name" value="Amino_acid_permease_CS"/>
</dbReference>
<dbReference type="InterPro" id="IPR050524">
    <property type="entry name" value="APC_YAT"/>
</dbReference>
<dbReference type="PANTHER" id="PTHR43341">
    <property type="entry name" value="AMINO ACID PERMEASE"/>
    <property type="match status" value="1"/>
</dbReference>
<dbReference type="PANTHER" id="PTHR43341:SF1">
    <property type="entry name" value="GENERAL AMINO-ACID PERMEASE GAP1"/>
    <property type="match status" value="1"/>
</dbReference>
<dbReference type="Pfam" id="PF00324">
    <property type="entry name" value="AA_permease"/>
    <property type="match status" value="1"/>
</dbReference>
<dbReference type="PROSITE" id="PS00218">
    <property type="entry name" value="AMINO_ACID_PERMEASE_1"/>
    <property type="match status" value="1"/>
</dbReference>
<organism>
    <name type="scientific">Schizosaccharomyces pombe (strain 972 / ATCC 24843)</name>
    <name type="common">Fission yeast</name>
    <dbReference type="NCBI Taxonomy" id="284812"/>
    <lineage>
        <taxon>Eukaryota</taxon>
        <taxon>Fungi</taxon>
        <taxon>Dikarya</taxon>
        <taxon>Ascomycota</taxon>
        <taxon>Taphrinomycotina</taxon>
        <taxon>Schizosaccharomycetes</taxon>
        <taxon>Schizosaccharomycetales</taxon>
        <taxon>Schizosaccharomycetaceae</taxon>
        <taxon>Schizosaccharomyces</taxon>
    </lineage>
</organism>
<protein>
    <recommendedName>
        <fullName>Cationic amino acid transporter 1</fullName>
    </recommendedName>
</protein>
<gene>
    <name type="primary">cat1</name>
    <name type="ORF">SPAC869.11</name>
    <name type="ORF">SPAC922.08c</name>
</gene>
<feature type="chain" id="PRO_0000054179" description="Cationic amino acid transporter 1">
    <location>
        <begin position="1"/>
        <end position="587"/>
    </location>
</feature>
<feature type="topological domain" description="Cytoplasmic" evidence="1">
    <location>
        <begin position="1"/>
        <end position="90"/>
    </location>
</feature>
<feature type="transmembrane region" description="Helical" evidence="2">
    <location>
        <begin position="91"/>
        <end position="111"/>
    </location>
</feature>
<feature type="topological domain" description="Extracellular" evidence="1">
    <location>
        <begin position="112"/>
        <end position="115"/>
    </location>
</feature>
<feature type="transmembrane region" description="Helical" evidence="2">
    <location>
        <begin position="116"/>
        <end position="136"/>
    </location>
</feature>
<feature type="topological domain" description="Cytoplasmic" evidence="1">
    <location>
        <begin position="137"/>
        <end position="158"/>
    </location>
</feature>
<feature type="transmembrane region" description="Helical" evidence="2">
    <location>
        <begin position="159"/>
        <end position="179"/>
    </location>
</feature>
<feature type="topological domain" description="Extracellular" evidence="1">
    <location>
        <begin position="180"/>
        <end position="193"/>
    </location>
</feature>
<feature type="transmembrane region" description="Helical" evidence="2">
    <location>
        <begin position="194"/>
        <end position="214"/>
    </location>
</feature>
<feature type="topological domain" description="Cytoplasmic" evidence="1">
    <location>
        <begin position="215"/>
        <end position="222"/>
    </location>
</feature>
<feature type="transmembrane region" description="Helical" evidence="2">
    <location>
        <begin position="223"/>
        <end position="243"/>
    </location>
</feature>
<feature type="topological domain" description="Extracellular" evidence="1">
    <location>
        <begin position="244"/>
        <end position="272"/>
    </location>
</feature>
<feature type="transmembrane region" description="Helical" evidence="2">
    <location>
        <begin position="273"/>
        <end position="293"/>
    </location>
</feature>
<feature type="topological domain" description="Cytoplasmic" evidence="1">
    <location>
        <begin position="294"/>
        <end position="310"/>
    </location>
</feature>
<feature type="transmembrane region" description="Helical" evidence="2">
    <location>
        <begin position="311"/>
        <end position="331"/>
    </location>
</feature>
<feature type="topological domain" description="Extracellular" evidence="1">
    <location>
        <begin position="332"/>
        <end position="354"/>
    </location>
</feature>
<feature type="transmembrane region" description="Helical" evidence="2">
    <location>
        <begin position="355"/>
        <end position="375"/>
    </location>
</feature>
<feature type="topological domain" description="Cytoplasmic" evidence="1">
    <location>
        <begin position="376"/>
        <end position="405"/>
    </location>
</feature>
<feature type="transmembrane region" description="Helical" evidence="2">
    <location>
        <begin position="406"/>
        <end position="426"/>
    </location>
</feature>
<feature type="topological domain" description="Extracellular" evidence="1">
    <location>
        <begin position="427"/>
        <end position="444"/>
    </location>
</feature>
<feature type="transmembrane region" description="Helical" evidence="2">
    <location>
        <begin position="445"/>
        <end position="465"/>
    </location>
</feature>
<feature type="topological domain" description="Cytoplasmic" evidence="1">
    <location>
        <begin position="466"/>
        <end position="491"/>
    </location>
</feature>
<feature type="transmembrane region" description="Helical" evidence="2">
    <location>
        <begin position="492"/>
        <end position="512"/>
    </location>
</feature>
<feature type="topological domain" description="Extracellular" evidence="1">
    <location>
        <begin position="513"/>
        <end position="520"/>
    </location>
</feature>
<feature type="transmembrane region" description="Helical" evidence="2">
    <location>
        <begin position="521"/>
        <end position="541"/>
    </location>
</feature>
<feature type="topological domain" description="Cytoplasmic" evidence="1">
    <location>
        <begin position="542"/>
        <end position="580"/>
    </location>
</feature>
<feature type="modified residue" description="Phosphoserine" evidence="4">
    <location>
        <position position="29"/>
    </location>
</feature>
<feature type="modified residue" description="Phosphoserine" evidence="4">
    <location>
        <position position="30"/>
    </location>
</feature>
<feature type="modified residue" description="Phosphoserine" evidence="4">
    <location>
        <position position="37"/>
    </location>
</feature>
<reference key="1">
    <citation type="journal article" date="2002" name="Nature">
        <title>The genome sequence of Schizosaccharomyces pombe.</title>
        <authorList>
            <person name="Wood V."/>
            <person name="Gwilliam R."/>
            <person name="Rajandream M.A."/>
            <person name="Lyne M.H."/>
            <person name="Lyne R."/>
            <person name="Stewart A."/>
            <person name="Sgouros J.G."/>
            <person name="Peat N."/>
            <person name="Hayles J."/>
            <person name="Baker S.G."/>
            <person name="Basham D."/>
            <person name="Bowman S."/>
            <person name="Brooks K."/>
            <person name="Brown D."/>
            <person name="Brown S."/>
            <person name="Chillingworth T."/>
            <person name="Churcher C.M."/>
            <person name="Collins M."/>
            <person name="Connor R."/>
            <person name="Cronin A."/>
            <person name="Davis P."/>
            <person name="Feltwell T."/>
            <person name="Fraser A."/>
            <person name="Gentles S."/>
            <person name="Goble A."/>
            <person name="Hamlin N."/>
            <person name="Harris D.E."/>
            <person name="Hidalgo J."/>
            <person name="Hodgson G."/>
            <person name="Holroyd S."/>
            <person name="Hornsby T."/>
            <person name="Howarth S."/>
            <person name="Huckle E.J."/>
            <person name="Hunt S."/>
            <person name="Jagels K."/>
            <person name="James K.D."/>
            <person name="Jones L."/>
            <person name="Jones M."/>
            <person name="Leather S."/>
            <person name="McDonald S."/>
            <person name="McLean J."/>
            <person name="Mooney P."/>
            <person name="Moule S."/>
            <person name="Mungall K.L."/>
            <person name="Murphy L.D."/>
            <person name="Niblett D."/>
            <person name="Odell C."/>
            <person name="Oliver K."/>
            <person name="O'Neil S."/>
            <person name="Pearson D."/>
            <person name="Quail M.A."/>
            <person name="Rabbinowitsch E."/>
            <person name="Rutherford K.M."/>
            <person name="Rutter S."/>
            <person name="Saunders D."/>
            <person name="Seeger K."/>
            <person name="Sharp S."/>
            <person name="Skelton J."/>
            <person name="Simmonds M.N."/>
            <person name="Squares R."/>
            <person name="Squares S."/>
            <person name="Stevens K."/>
            <person name="Taylor K."/>
            <person name="Taylor R.G."/>
            <person name="Tivey A."/>
            <person name="Walsh S.V."/>
            <person name="Warren T."/>
            <person name="Whitehead S."/>
            <person name="Woodward J.R."/>
            <person name="Volckaert G."/>
            <person name="Aert R."/>
            <person name="Robben J."/>
            <person name="Grymonprez B."/>
            <person name="Weltjens I."/>
            <person name="Vanstreels E."/>
            <person name="Rieger M."/>
            <person name="Schaefer M."/>
            <person name="Mueller-Auer S."/>
            <person name="Gabel C."/>
            <person name="Fuchs M."/>
            <person name="Duesterhoeft A."/>
            <person name="Fritzc C."/>
            <person name="Holzer E."/>
            <person name="Moestl D."/>
            <person name="Hilbert H."/>
            <person name="Borzym K."/>
            <person name="Langer I."/>
            <person name="Beck A."/>
            <person name="Lehrach H."/>
            <person name="Reinhardt R."/>
            <person name="Pohl T.M."/>
            <person name="Eger P."/>
            <person name="Zimmermann W."/>
            <person name="Wedler H."/>
            <person name="Wambutt R."/>
            <person name="Purnelle B."/>
            <person name="Goffeau A."/>
            <person name="Cadieu E."/>
            <person name="Dreano S."/>
            <person name="Gloux S."/>
            <person name="Lelaure V."/>
            <person name="Mottier S."/>
            <person name="Galibert F."/>
            <person name="Aves S.J."/>
            <person name="Xiang Z."/>
            <person name="Hunt C."/>
            <person name="Moore K."/>
            <person name="Hurst S.M."/>
            <person name="Lucas M."/>
            <person name="Rochet M."/>
            <person name="Gaillardin C."/>
            <person name="Tallada V.A."/>
            <person name="Garzon A."/>
            <person name="Thode G."/>
            <person name="Daga R.R."/>
            <person name="Cruzado L."/>
            <person name="Jimenez J."/>
            <person name="Sanchez M."/>
            <person name="del Rey F."/>
            <person name="Benito J."/>
            <person name="Dominguez A."/>
            <person name="Revuelta J.L."/>
            <person name="Moreno S."/>
            <person name="Armstrong J."/>
            <person name="Forsburg S.L."/>
            <person name="Cerutti L."/>
            <person name="Lowe T."/>
            <person name="McCombie W.R."/>
            <person name="Paulsen I."/>
            <person name="Potashkin J."/>
            <person name="Shpakovski G.V."/>
            <person name="Ussery D."/>
            <person name="Barrell B.G."/>
            <person name="Nurse P."/>
        </authorList>
    </citation>
    <scope>NUCLEOTIDE SEQUENCE [LARGE SCALE GENOMIC DNA]</scope>
    <source>
        <strain>972 / ATCC 24843</strain>
    </source>
</reference>
<reference key="2">
    <citation type="journal article" date="2011" name="Science">
        <title>Comparative functional genomics of the fission yeasts.</title>
        <authorList>
            <person name="Rhind N."/>
            <person name="Chen Z."/>
            <person name="Yassour M."/>
            <person name="Thompson D.A."/>
            <person name="Haas B.J."/>
            <person name="Habib N."/>
            <person name="Wapinski I."/>
            <person name="Roy S."/>
            <person name="Lin M.F."/>
            <person name="Heiman D.I."/>
            <person name="Young S.K."/>
            <person name="Furuya K."/>
            <person name="Guo Y."/>
            <person name="Pidoux A."/>
            <person name="Chen H.M."/>
            <person name="Robbertse B."/>
            <person name="Goldberg J.M."/>
            <person name="Aoki K."/>
            <person name="Bayne E.H."/>
            <person name="Berlin A.M."/>
            <person name="Desjardins C.A."/>
            <person name="Dobbs E."/>
            <person name="Dukaj L."/>
            <person name="Fan L."/>
            <person name="FitzGerald M.G."/>
            <person name="French C."/>
            <person name="Gujja S."/>
            <person name="Hansen K."/>
            <person name="Keifenheim D."/>
            <person name="Levin J.Z."/>
            <person name="Mosher R.A."/>
            <person name="Mueller C.A."/>
            <person name="Pfiffner J."/>
            <person name="Priest M."/>
            <person name="Russ C."/>
            <person name="Smialowska A."/>
            <person name="Swoboda P."/>
            <person name="Sykes S.M."/>
            <person name="Vaughn M."/>
            <person name="Vengrova S."/>
            <person name="Yoder R."/>
            <person name="Zeng Q."/>
            <person name="Allshire R."/>
            <person name="Baulcombe D."/>
            <person name="Birren B.W."/>
            <person name="Brown W."/>
            <person name="Ekwall K."/>
            <person name="Kellis M."/>
            <person name="Leatherwood J."/>
            <person name="Levin H."/>
            <person name="Margalit H."/>
            <person name="Martienssen R."/>
            <person name="Nieduszynski C.A."/>
            <person name="Spatafora J.W."/>
            <person name="Friedman N."/>
            <person name="Dalgaard J.Z."/>
            <person name="Baumann P."/>
            <person name="Niki H."/>
            <person name="Regev A."/>
            <person name="Nusbaum C."/>
        </authorList>
    </citation>
    <scope>REVISION OF GENE MODEL</scope>
</reference>
<reference key="3">
    <citation type="journal article" date="2008" name="J. Proteome Res.">
        <title>Phosphoproteome analysis of fission yeast.</title>
        <authorList>
            <person name="Wilson-Grady J.T."/>
            <person name="Villen J."/>
            <person name="Gygi S.P."/>
        </authorList>
    </citation>
    <scope>PHOSPHORYLATION [LARGE SCALE ANALYSIS] AT SER-29; SER-30 AND SER-37</scope>
    <scope>IDENTIFICATION BY MASS SPECTROMETRY</scope>
</reference>
<reference key="4">
    <citation type="journal article" date="2008" name="Mol. Genet. Genomics">
        <title>The Tsc/Rheb signaling pathway controls basic amino acid uptake via the Cat1 permease in fission yeast.</title>
        <authorList>
            <person name="Aspuria P.J."/>
            <person name="Tamanoi F."/>
        </authorList>
    </citation>
    <scope>FUNCTION</scope>
    <scope>DISRUPTION PHENOTYPE</scope>
    <scope>SUBCELLULAR LOCATION</scope>
</reference>
<sequence length="587" mass="64479">MSHSDFNMEPEYVSFSDKDTKSILNESKSSLKDVKPSLEEKSYITPGLVDDVEPKGKNFVVRFFDDFKPAKATGEDGTALKRSLKSRHMQMISIGGAIGTGLYVGSGSSLADGGPASVIINYSLIGIMMFFIVYALGEMAVAYPVAGGFNTYATRFIDPAWGFAVSWNYFINYFVTFPLELTTCAITFRYWTDINSAAWISIFLVVIIIVNLFGVRAYGEVEFILSTVKVVATFGFIILAIIINCGGVPTDHRGYIGGSIIKHKPFRHGFKGFCSVFTTAAFSFSGTEVIGLAAAEVDNPQKALPHAVKQVFWRIAIFYVVSLILIGLLISPDDPNLMGNGSTSVSPFVLAIKEANIKGLPSVFNAVIIISVVSVTNSSTYTAGRTLHGMANLKQAPSFFKYTDRLGRPLLAMIVVLLFGFFAYINEADKNGNDVSDTVFNWLLALSGLSNFFTWGSICLCHIIFRLAFKKQGHSLKELGFVSPMGIWGSCIGLFFNILCLMAQFYVSLFPIGGKPNANDFFQGYLAAPVTLAFFIGYKIYDRSHIPSLDKLDITTGLKTYENLDEEEDEPTTASKRIFKKISSVFC</sequence>
<comment type="function">
    <text evidence="3">Major permease specifically involved in arginine and lysine uptake.</text>
</comment>
<comment type="subcellular location">
    <subcellularLocation>
        <location evidence="3">Cell membrane</location>
        <topology evidence="3">Multi-pass membrane protein</topology>
    </subcellularLocation>
    <subcellularLocation>
        <location evidence="3">Cell tip</location>
    </subcellularLocation>
    <text>enriched toward the growing ends of the cells.</text>
</comment>
<comment type="disruption phenotype">
    <text evidence="3">Leads to a dramatic decrease in the uptake of arginine or lysine and resistance to canavanine and thialysine.</text>
</comment>
<comment type="similarity">
    <text evidence="5">Belongs to the amino acid-polyamine-organocation (APC) superfamily.</text>
</comment>
<accession>Q9URZ4</accession>
<accession>Q9URW8</accession>
<keyword id="KW-0029">Amino-acid transport</keyword>
<keyword id="KW-1003">Cell membrane</keyword>
<keyword id="KW-0472">Membrane</keyword>
<keyword id="KW-0597">Phosphoprotein</keyword>
<keyword id="KW-1185">Reference proteome</keyword>
<keyword id="KW-0812">Transmembrane</keyword>
<keyword id="KW-1133">Transmembrane helix</keyword>
<keyword id="KW-0813">Transport</keyword>
<proteinExistence type="evidence at protein level"/>